<proteinExistence type="evidence at protein level"/>
<feature type="peptide" id="PRO_0000461753" description="Cryptide Pep-18" evidence="1">
    <location>
        <begin position="1"/>
        <end position="8"/>
    </location>
</feature>
<evidence type="ECO:0000269" key="1">
    <source>
    </source>
</evidence>
<evidence type="ECO:0000303" key="2">
    <source>
    </source>
</evidence>
<evidence type="ECO:0000305" key="3">
    <source>
    </source>
</evidence>
<name>CRY18_TITOB</name>
<keyword id="KW-0903">Direct protein sequencing</keyword>
<keyword id="KW-0964">Secreted</keyword>
<protein>
    <recommendedName>
        <fullName evidence="2">Cryptide Pep-18</fullName>
    </recommendedName>
</protein>
<reference key="1">
    <citation type="journal article" date="2018" name="J. Proteomics">
        <title>Profiling the short, linear, non-disulfide bond-containing peptidome from the venom of the scorpion Tityus obscurus.</title>
        <authorList>
            <person name="Dias N.B."/>
            <person name="de Souza B.M."/>
            <person name="Cocchi F.K."/>
            <person name="Chalkidis H.M."/>
            <person name="Dorce V.A.C."/>
            <person name="Palma M.S."/>
        </authorList>
    </citation>
    <scope>PROTEIN SEQUENCE</scope>
    <scope>IDENTIFICATION BY MASS SPECTROMETRY</scope>
    <scope>MASS SPECTROMETRY</scope>
    <scope>SUBCELLULAR LOCATION</scope>
    <source>
        <tissue>Venom</tissue>
    </source>
</reference>
<dbReference type="GO" id="GO:0005576">
    <property type="term" value="C:extracellular region"/>
    <property type="evidence" value="ECO:0007669"/>
    <property type="project" value="UniProtKB-SubCell"/>
</dbReference>
<comment type="function">
    <text evidence="3">May act to induce hypotension.</text>
</comment>
<comment type="subcellular location">
    <subcellularLocation>
        <location evidence="1">Secreted</location>
    </subcellularLocation>
</comment>
<comment type="tissue specificity">
    <text evidence="3">Expressed by the venom gland.</text>
</comment>
<comment type="mass spectrometry"/>
<sequence>KETNAKPP</sequence>
<organism>
    <name type="scientific">Tityus obscurus</name>
    <name type="common">Amazonian scorpion</name>
    <name type="synonym">Tityus cambridgei</name>
    <dbReference type="NCBI Taxonomy" id="1221240"/>
    <lineage>
        <taxon>Eukaryota</taxon>
        <taxon>Metazoa</taxon>
        <taxon>Ecdysozoa</taxon>
        <taxon>Arthropoda</taxon>
        <taxon>Chelicerata</taxon>
        <taxon>Arachnida</taxon>
        <taxon>Scorpiones</taxon>
        <taxon>Buthida</taxon>
        <taxon>Buthoidea</taxon>
        <taxon>Buthidae</taxon>
        <taxon>Tityus</taxon>
    </lineage>
</organism>
<accession>P0DRG3</accession>